<accession>Q8HZP6</accession>
<accession>Q2PZG4</accession>
<comment type="function">
    <text evidence="1">Nuclear phosphoprotein which forms a tight but non-covalently linked complex with the JUN/AP-1 transcription factor. On TGF-beta activation, forms a multimeric SMAD3/SMAD4/JUN/FOS complex, at the AP1/SMAD-binding site to regulate TGF-beta-mediated signaling. Has a critical function in regulating the development of cells destined to form and maintain the skeleton. It is thought to have an important role in signal transduction, cell proliferation and differentiation (By similarity). In growing cells, activates phospholipid synthesis, possibly by activating CDS1 and PI4K2A. This activity requires Tyr-dephosphorylation and association with the endoplasmic reticulum (By similarity).</text>
</comment>
<comment type="subunit">
    <text evidence="2 3 4">Heterodimer; with JUN (By similarity). Component of the SMAD3/SMAD4/JUN/FOS complex required for synergistic TGF-beta-mediated transcription at the AP1-binding site (By similarity). Interacts with SMAD3; the interaction is weak even on TGF-beta activation (By similarity). Interacts with MAFB (By similarity). Interacts with TSC22D3 (via N-terminus); this interaction inhibits the binding of active AP1 to its target DNA (By similarity). Interacts with CDS1 and PI4K2A (By similarity). Interacts (via bZIP domain and leucine-zipper region) with the multiprotein chromatin-remodeling complexes SWI/SNF: SWI/SNF-A (BAF) subunits SMARCB1, SMARCC2 and SMARCD1 (By similarity). Interacts (via bZIP domain and leucine-zipper region) with ARID1A (By similarity).</text>
</comment>
<comment type="subcellular location">
    <subcellularLocation>
        <location evidence="5">Nucleus</location>
    </subcellularLocation>
    <subcellularLocation>
        <location evidence="1">Endoplasmic reticulum</location>
    </subcellularLocation>
    <subcellularLocation>
        <location evidence="1">Cytoplasm</location>
        <location evidence="1">Cytosol</location>
    </subcellularLocation>
    <text evidence="1">In quiescent cells, present in very small amounts in the cytosol. Following induction of cell growth, first localizes to the endoplasmic reticulum and only later to the nucleus. Localization at the endoplasmic reticulum requires dephosphorylation at Tyr-10 and Tyr-30 (By similarity).</text>
</comment>
<comment type="PTM">
    <text evidence="1">Phosphorylated in the C-terminal upon stimulation by nerve growth factor (NGF) and epidermal growth factor (EGF). Phosphorylated, in vitro, by MAPK and RSK1. Phosphorylation on both Ser-363 and Ser-375 by MAPK1/2 and RSK1/2 leads to protein stabilization with phosphorylation on Ser-375 being the major site for protein stabilization on NGF stimulation. Phosphorylation on Ser-363 and Ser-375 primes further phosphorylations on Thr-326 and Thr-332 through promoting docking of MAPK to the DEF domain. Phosphorylation on Thr-233, induced by HA-RAS, activates the transcriptional activity and antagonizes sumoylation. Phosphorylation on Ser-363 by RSK2 in osteoblasts contributes to osteoblast transformation (By similarity).</text>
</comment>
<comment type="PTM">
    <text evidence="1">Constitutively sumoylated with SUMO1, SUMO2 and SUMO3. Desumoylated by SENP2. Sumoylation requires heterodimerization with JUN and is enhanced by mitogen stimulation. Sumoylation inhibits the AP-1 transcriptional activity and is, itself, inhibited by Ras-activated phosphorylation on Thr-233 (By similarity).</text>
</comment>
<comment type="PTM">
    <text evidence="1">In quiescent cells, the small amount of FOS present is phosphorylated at Tyr-10 and Tyr-30 by SRC. This Tyr-phosphorylated form is cytosolic. In growing cells, dephosphorylated by PTPN2. Dephosphorylation leads to the association with endoplasmic reticulum membranes and activation of phospholipid synthesis (By similarity).</text>
</comment>
<comment type="similarity">
    <text evidence="7">Belongs to the bZIP family. Fos subfamily.</text>
</comment>
<protein>
    <recommendedName>
        <fullName evidence="7">Protein c-Fos</fullName>
    </recommendedName>
    <alternativeName>
        <fullName>Cellular oncogene fos</fullName>
    </alternativeName>
    <alternativeName>
        <fullName evidence="7">Transcription factor AP-1 subunit c-Fos</fullName>
    </alternativeName>
</protein>
<keyword id="KW-0963">Cytoplasm</keyword>
<keyword id="KW-0238">DNA-binding</keyword>
<keyword id="KW-0256">Endoplasmic reticulum</keyword>
<keyword id="KW-1017">Isopeptide bond</keyword>
<keyword id="KW-0539">Nucleus</keyword>
<keyword id="KW-0597">Phosphoprotein</keyword>
<keyword id="KW-0656">Proto-oncogene</keyword>
<keyword id="KW-1185">Reference proteome</keyword>
<keyword id="KW-0832">Ubl conjugation</keyword>
<gene>
    <name type="primary">FOS</name>
</gene>
<sequence>MMFSGFNADYEASSSRCSSASPAGDNLSYYHSPADSFSSMGSPVNAQDFCTDLAVSSANFIPTVTAISTSPDLQWLVQPTLVSSVAPSQTRAPHPYGVPAPSAGAYSRAGVVKTVTAGGRAQSIGRRGKVEQLSPEEEEKRRIRRERNKMAAAKCRNRRRELTDTLQAETDQLEDEKSALQTEIANLLKEKEKLEFILAAHRPACKIPDDLGFPEEMSVASLDLSGGLPEAATPESEEAFTLPLLNDPEPKPSVEPVKSISSMELKAEPFDDFLFPASSRPSGSETARSVPDMDLSGSFYAADWEPLHGGSLGMGPMATELEPLCTPVVTCTPSCTTYTSSFVFTYPEADSFPSCGAAHRKGSSSNEPSSDSLSSPTLLAL</sequence>
<dbReference type="EMBL" id="AF540379">
    <property type="protein sequence ID" value="AAN16394.1"/>
    <property type="molecule type" value="mRNA"/>
</dbReference>
<dbReference type="EMBL" id="DQ288168">
    <property type="protein sequence ID" value="ABC00779.1"/>
    <property type="molecule type" value="Genomic_DNA"/>
</dbReference>
<dbReference type="RefSeq" id="NP_001009341.1">
    <property type="nucleotide sequence ID" value="NM_001009341.1"/>
</dbReference>
<dbReference type="SMR" id="Q8HZP6"/>
<dbReference type="STRING" id="9685.ENSFCAP00000046194"/>
<dbReference type="PaxDb" id="9685-ENSFCAP00000021643"/>
<dbReference type="Ensembl" id="ENSFCAT00000056629.1">
    <property type="protein sequence ID" value="ENSFCAP00000046194.1"/>
    <property type="gene ID" value="ENSFCAG00000025370.4"/>
</dbReference>
<dbReference type="GeneID" id="493935"/>
<dbReference type="KEGG" id="fca:493935"/>
<dbReference type="CTD" id="2353"/>
<dbReference type="VGNC" id="VGNC:62329">
    <property type="gene designation" value="FOS"/>
</dbReference>
<dbReference type="eggNOG" id="KOG1414">
    <property type="taxonomic scope" value="Eukaryota"/>
</dbReference>
<dbReference type="GeneTree" id="ENSGT00940000159276"/>
<dbReference type="HOGENOM" id="CLU_049742_2_0_1"/>
<dbReference type="InParanoid" id="Q8HZP6"/>
<dbReference type="OMA" id="NRTHPYG"/>
<dbReference type="OrthoDB" id="5866312at2759"/>
<dbReference type="Proteomes" id="UP000011712">
    <property type="component" value="Chromosome B3"/>
</dbReference>
<dbReference type="Bgee" id="ENSFCAG00000025370">
    <property type="expression patterns" value="Expressed in zone of skin and 11 other cell types or tissues"/>
</dbReference>
<dbReference type="GO" id="GO:0005829">
    <property type="term" value="C:cytosol"/>
    <property type="evidence" value="ECO:0007669"/>
    <property type="project" value="UniProtKB-SubCell"/>
</dbReference>
<dbReference type="GO" id="GO:0005783">
    <property type="term" value="C:endoplasmic reticulum"/>
    <property type="evidence" value="ECO:0007669"/>
    <property type="project" value="UniProtKB-SubCell"/>
</dbReference>
<dbReference type="GO" id="GO:0005634">
    <property type="term" value="C:nucleus"/>
    <property type="evidence" value="ECO:0000318"/>
    <property type="project" value="GO_Central"/>
</dbReference>
<dbReference type="GO" id="GO:0000981">
    <property type="term" value="F:DNA-binding transcription factor activity, RNA polymerase II-specific"/>
    <property type="evidence" value="ECO:0000318"/>
    <property type="project" value="GO_Central"/>
</dbReference>
<dbReference type="GO" id="GO:0000978">
    <property type="term" value="F:RNA polymerase II cis-regulatory region sequence-specific DNA binding"/>
    <property type="evidence" value="ECO:0000318"/>
    <property type="project" value="GO_Central"/>
</dbReference>
<dbReference type="GO" id="GO:0006357">
    <property type="term" value="P:regulation of transcription by RNA polymerase II"/>
    <property type="evidence" value="ECO:0000318"/>
    <property type="project" value="GO_Central"/>
</dbReference>
<dbReference type="CDD" id="cd14721">
    <property type="entry name" value="bZIP_Fos"/>
    <property type="match status" value="1"/>
</dbReference>
<dbReference type="FunFam" id="1.20.5.170:FF:000006">
    <property type="entry name" value="fos-related antigen 2 isoform X1"/>
    <property type="match status" value="1"/>
</dbReference>
<dbReference type="Gene3D" id="1.20.5.170">
    <property type="match status" value="1"/>
</dbReference>
<dbReference type="InterPro" id="IPR000837">
    <property type="entry name" value="AP-1"/>
</dbReference>
<dbReference type="InterPro" id="IPR004827">
    <property type="entry name" value="bZIP"/>
</dbReference>
<dbReference type="InterPro" id="IPR046347">
    <property type="entry name" value="bZIP_sf"/>
</dbReference>
<dbReference type="PANTHER" id="PTHR23351">
    <property type="entry name" value="FOS TRANSCRIPTION FACTOR-RELATED"/>
    <property type="match status" value="1"/>
</dbReference>
<dbReference type="PANTHER" id="PTHR23351:SF4">
    <property type="entry name" value="PROTEIN C-FOS"/>
    <property type="match status" value="1"/>
</dbReference>
<dbReference type="Pfam" id="PF00170">
    <property type="entry name" value="bZIP_1"/>
    <property type="match status" value="1"/>
</dbReference>
<dbReference type="PRINTS" id="PR00042">
    <property type="entry name" value="LEUZIPPRFOS"/>
</dbReference>
<dbReference type="SMART" id="SM00338">
    <property type="entry name" value="BRLZ"/>
    <property type="match status" value="1"/>
</dbReference>
<dbReference type="SUPFAM" id="SSF57959">
    <property type="entry name" value="Leucine zipper domain"/>
    <property type="match status" value="1"/>
</dbReference>
<dbReference type="PROSITE" id="PS50217">
    <property type="entry name" value="BZIP"/>
    <property type="match status" value="1"/>
</dbReference>
<dbReference type="PROSITE" id="PS00036">
    <property type="entry name" value="BZIP_BASIC"/>
    <property type="match status" value="1"/>
</dbReference>
<proteinExistence type="evidence at transcript level"/>
<name>FOS_FELCA</name>
<feature type="chain" id="PRO_0000076464" description="Protein c-Fos">
    <location>
        <begin position="1"/>
        <end position="381"/>
    </location>
</feature>
<feature type="domain" description="bZIP" evidence="5">
    <location>
        <begin position="138"/>
        <end position="201"/>
    </location>
</feature>
<feature type="region of interest" description="Disordered" evidence="6">
    <location>
        <begin position="120"/>
        <end position="140"/>
    </location>
</feature>
<feature type="region of interest" description="Basic motif; required for the activation of phospholipid synthesis, but not for CDS1-binding" evidence="5">
    <location>
        <begin position="140"/>
        <end position="160"/>
    </location>
</feature>
<feature type="region of interest" description="Leucine-zipper" evidence="5">
    <location>
        <begin position="166"/>
        <end position="194"/>
    </location>
</feature>
<feature type="region of interest" description="Disordered" evidence="6">
    <location>
        <begin position="355"/>
        <end position="381"/>
    </location>
</feature>
<feature type="compositionally biased region" description="Low complexity" evidence="6">
    <location>
        <begin position="363"/>
        <end position="375"/>
    </location>
</feature>
<feature type="modified residue" description="Phosphotyrosine; by SRC" evidence="2">
    <location>
        <position position="10"/>
    </location>
</feature>
<feature type="modified residue" description="Phosphotyrosine; by SRC" evidence="2">
    <location>
        <position position="30"/>
    </location>
</feature>
<feature type="modified residue" description="Phosphothreonine" evidence="3">
    <location>
        <position position="233"/>
    </location>
</feature>
<feature type="modified residue" description="Phosphothreonine; by MAPK1 and MAPK3" evidence="2">
    <location>
        <position position="326"/>
    </location>
</feature>
<feature type="modified residue" description="Phosphothreonine; by MAPK1 and MAPK3" evidence="2">
    <location>
        <position position="332"/>
    </location>
</feature>
<feature type="modified residue" description="Phosphoserine; by MAPK1, MAPK3 and RPS6KA3" evidence="2">
    <location>
        <position position="363"/>
    </location>
</feature>
<feature type="modified residue" description="Phosphoserine; by MAPK1 and MAPK3" evidence="2">
    <location>
        <position position="375"/>
    </location>
</feature>
<feature type="cross-link" description="Glycyl lysine isopeptide (Lys-Gly) (interchain with G-Cter in SUMO2)" evidence="2">
    <location>
        <position position="113"/>
    </location>
</feature>
<feature type="cross-link" description="Glycyl lysine isopeptide (Lys-Gly) (interchain with G-Cter in SUMO2)" evidence="2">
    <location>
        <position position="129"/>
    </location>
</feature>
<feature type="cross-link" description="Glycyl lysine isopeptide (Lys-Gly) (interchain with G-Cter in SUMO); alternate" evidence="1">
    <location>
        <position position="266"/>
    </location>
</feature>
<feature type="cross-link" description="Glycyl lysine isopeptide (Lys-Gly) (interchain with G-Cter in SUMO2); alternate" evidence="2">
    <location>
        <position position="266"/>
    </location>
</feature>
<reference key="1">
    <citation type="journal article" date="2003" name="Brain Res. Mol. Brain Res.">
        <title>Molecular cloning and differential expression of the cat immediate early gene c-fos.</title>
        <authorList>
            <person name="Van der Gucht E."/>
            <person name="Massie A."/>
            <person name="De Klerck B."/>
            <person name="Peeters K."/>
            <person name="Winters K."/>
            <person name="Gerets H.H."/>
            <person name="Clerens S."/>
            <person name="Vandesande F."/>
            <person name="Arckens L."/>
        </authorList>
    </citation>
    <scope>NUCLEOTIDE SEQUENCE [MRNA]</scope>
</reference>
<reference key="2">
    <citation type="submission" date="2005-11" db="EMBL/GenBank/DDBJ databases">
        <title>Determination of evolutionary relationships of mammalia using cFOS.</title>
        <authorList>
            <person name="Weiler E."/>
        </authorList>
    </citation>
    <scope>NUCLEOTIDE SEQUENCE [GENOMIC DNA]</scope>
    <source>
        <tissue>Visual cortex</tissue>
    </source>
</reference>
<evidence type="ECO:0000250" key="1"/>
<evidence type="ECO:0000250" key="2">
    <source>
        <dbReference type="UniProtKB" id="P01100"/>
    </source>
</evidence>
<evidence type="ECO:0000250" key="3">
    <source>
        <dbReference type="UniProtKB" id="P01101"/>
    </source>
</evidence>
<evidence type="ECO:0000250" key="4">
    <source>
        <dbReference type="UniProtKB" id="P12841"/>
    </source>
</evidence>
<evidence type="ECO:0000255" key="5">
    <source>
        <dbReference type="PROSITE-ProRule" id="PRU00978"/>
    </source>
</evidence>
<evidence type="ECO:0000256" key="6">
    <source>
        <dbReference type="SAM" id="MobiDB-lite"/>
    </source>
</evidence>
<evidence type="ECO:0000305" key="7"/>
<organism>
    <name type="scientific">Felis catus</name>
    <name type="common">Cat</name>
    <name type="synonym">Felis silvestris catus</name>
    <dbReference type="NCBI Taxonomy" id="9685"/>
    <lineage>
        <taxon>Eukaryota</taxon>
        <taxon>Metazoa</taxon>
        <taxon>Chordata</taxon>
        <taxon>Craniata</taxon>
        <taxon>Vertebrata</taxon>
        <taxon>Euteleostomi</taxon>
        <taxon>Mammalia</taxon>
        <taxon>Eutheria</taxon>
        <taxon>Laurasiatheria</taxon>
        <taxon>Carnivora</taxon>
        <taxon>Feliformia</taxon>
        <taxon>Felidae</taxon>
        <taxon>Felinae</taxon>
        <taxon>Felis</taxon>
    </lineage>
</organism>